<dbReference type="EMBL" id="GG704574">
    <property type="protein sequence ID" value="EEX03505.1"/>
    <property type="molecule type" value="Genomic_DNA"/>
</dbReference>
<dbReference type="RefSeq" id="WP_001984473.1">
    <property type="nucleotide sequence ID" value="NZ_MJHA01000006.1"/>
</dbReference>
<dbReference type="PDB" id="5FP1">
    <property type="method" value="X-ray"/>
    <property type="resolution" value="1.94 A"/>
    <property type="chains" value="A=29-743"/>
</dbReference>
<dbReference type="PDBsum" id="5FP1"/>
<dbReference type="SMR" id="D0CAH3"/>
<dbReference type="PATRIC" id="fig|575584.18.peg.3552"/>
<dbReference type="Proteomes" id="UP000005740">
    <property type="component" value="Unassembled WGS sequence"/>
</dbReference>
<dbReference type="GO" id="GO:0009279">
    <property type="term" value="C:cell outer membrane"/>
    <property type="evidence" value="ECO:0007669"/>
    <property type="project" value="UniProtKB-SubCell"/>
</dbReference>
<dbReference type="GO" id="GO:0046930">
    <property type="term" value="C:pore complex"/>
    <property type="evidence" value="ECO:0007669"/>
    <property type="project" value="UniProtKB-KW"/>
</dbReference>
<dbReference type="GO" id="GO:0015288">
    <property type="term" value="F:porin activity"/>
    <property type="evidence" value="ECO:0007669"/>
    <property type="project" value="UniProtKB-KW"/>
</dbReference>
<dbReference type="GO" id="GO:0015344">
    <property type="term" value="F:siderophore uptake transmembrane transporter activity"/>
    <property type="evidence" value="ECO:0007669"/>
    <property type="project" value="TreeGrafter"/>
</dbReference>
<dbReference type="GO" id="GO:0038023">
    <property type="term" value="F:signaling receptor activity"/>
    <property type="evidence" value="ECO:0007669"/>
    <property type="project" value="InterPro"/>
</dbReference>
<dbReference type="CDD" id="cd01347">
    <property type="entry name" value="ligand_gated_channel"/>
    <property type="match status" value="1"/>
</dbReference>
<dbReference type="FunFam" id="2.170.130.10:FF:000001">
    <property type="entry name" value="Catecholate siderophore TonB-dependent receptor"/>
    <property type="match status" value="1"/>
</dbReference>
<dbReference type="Gene3D" id="2.40.170.20">
    <property type="entry name" value="TonB-dependent receptor, beta-barrel domain"/>
    <property type="match status" value="1"/>
</dbReference>
<dbReference type="Gene3D" id="2.170.130.10">
    <property type="entry name" value="TonB-dependent receptor, plug domain"/>
    <property type="match status" value="1"/>
</dbReference>
<dbReference type="InterPro" id="IPR012910">
    <property type="entry name" value="Plug_dom"/>
</dbReference>
<dbReference type="InterPro" id="IPR037066">
    <property type="entry name" value="Plug_dom_sf"/>
</dbReference>
<dbReference type="InterPro" id="IPR039426">
    <property type="entry name" value="TonB-dep_rcpt-like"/>
</dbReference>
<dbReference type="InterPro" id="IPR000531">
    <property type="entry name" value="TonB-dep_rcpt_b-brl"/>
</dbReference>
<dbReference type="InterPro" id="IPR036942">
    <property type="entry name" value="TonB_rcpt_b-brl_sf"/>
</dbReference>
<dbReference type="InterPro" id="IPR010105">
    <property type="entry name" value="TonB_sidphr_rcpt"/>
</dbReference>
<dbReference type="NCBIfam" id="TIGR01783">
    <property type="entry name" value="TonB-siderophor"/>
    <property type="match status" value="1"/>
</dbReference>
<dbReference type="PANTHER" id="PTHR32552:SF89">
    <property type="entry name" value="CATECHOLATE SIDEROPHORE RECEPTOR FIU"/>
    <property type="match status" value="1"/>
</dbReference>
<dbReference type="PANTHER" id="PTHR32552">
    <property type="entry name" value="FERRICHROME IRON RECEPTOR-RELATED"/>
    <property type="match status" value="1"/>
</dbReference>
<dbReference type="Pfam" id="PF07715">
    <property type="entry name" value="Plug"/>
    <property type="match status" value="1"/>
</dbReference>
<dbReference type="Pfam" id="PF00593">
    <property type="entry name" value="TonB_dep_Rec_b-barrel"/>
    <property type="match status" value="1"/>
</dbReference>
<dbReference type="SUPFAM" id="SSF56935">
    <property type="entry name" value="Porins"/>
    <property type="match status" value="1"/>
</dbReference>
<dbReference type="PROSITE" id="PS52016">
    <property type="entry name" value="TONB_DEPENDENT_REC_3"/>
    <property type="match status" value="1"/>
</dbReference>
<name>PIUA_ACIB2</name>
<keyword id="KW-0002">3D-structure</keyword>
<keyword id="KW-0998">Cell outer membrane</keyword>
<keyword id="KW-1015">Disulfide bond</keyword>
<keyword id="KW-0406">Ion transport</keyword>
<keyword id="KW-0408">Iron</keyword>
<keyword id="KW-0410">Iron transport</keyword>
<keyword id="KW-0472">Membrane</keyword>
<keyword id="KW-0626">Porin</keyword>
<keyword id="KW-0675">Receptor</keyword>
<keyword id="KW-1185">Reference proteome</keyword>
<keyword id="KW-0732">Signal</keyword>
<keyword id="KW-0798">TonB box</keyword>
<keyword id="KW-0812">Transmembrane</keyword>
<keyword id="KW-1134">Transmembrane beta strand</keyword>
<keyword id="KW-0813">Transport</keyword>
<gene>
    <name evidence="5" type="primary">piuA</name>
    <name evidence="5" type="ORF">A1S_0474</name>
    <name evidence="8" type="ORF">HMPREF0010_01753</name>
</gene>
<proteinExistence type="evidence at protein level"/>
<sequence>MSLIRTRKKIVSSAIASSLSMIATTAMAQEAVSQLPTIHTKATQEESLKVDQSANSKFVAPLLDTPKSVSVISKQLIEDTKVTTLADALRTVPGITLGAGEGGNPNGDRPFIRGYSSESSMYIDGIRNSTSQNREMFAVEQVEVTKGSASAMGGAGSVGGSINMISKVAKKGDFLEGSVAAGTDNYQRITLDGNKDFGNGIAARVAVLGHQNEKAGQSNGAEYKRVGIAPSITFGLDTPTRATLSYYYLQTDDKPDSGIPYWDSSLGKAQGKPAEVKQGTYYGWKDRDFQKQENHIGTIKLEHDLTDNITITNTAMYAKSKNDYVWTNPDDSKGNVGKGLVWHRLNSAITDSETFTDQLALTGKFDTGFLKHRFNVGAEYSKQKTDKGGYNIIDAKGNVSSTGFYSDCSDLSTNWCTSLNGPTQKPFVDRLQARPDFDATVESTSVYLLDNIEITPKWLLDLGLRWDKFEAEQNFLATSSAAAYTAKNNSDFVTYQAGITFKPTENGSIYTSYATSASPVGLNAGWGDNSETINANNQMIDPEEAQTFEIGTKWDFLDNHLNLTAAIFRTEKQNTRVQIDPTTYANVGESKVDGFELGLNGEITDKWNISAGYTYLDSELTKNGKSCRSGKCTDQSIYNGNQMPNVPKQAATLWTTYKVLPQLTVGAGAVYSDKVYGDVANTKWVPSYVRYDAMARYNVNKNVDLQLNINNLSDKRYFTKAYASHYATEAEGRSAVLAVNFKY</sequence>
<evidence type="ECO:0000255" key="1"/>
<evidence type="ECO:0000255" key="2">
    <source>
        <dbReference type="PROSITE-ProRule" id="PRU01360"/>
    </source>
</evidence>
<evidence type="ECO:0000269" key="3">
    <source>
    </source>
</evidence>
<evidence type="ECO:0000269" key="4">
    <source>
    </source>
</evidence>
<evidence type="ECO:0000303" key="5">
    <source>
    </source>
</evidence>
<evidence type="ECO:0000305" key="6"/>
<evidence type="ECO:0000305" key="7">
    <source>
    </source>
</evidence>
<evidence type="ECO:0000312" key="8">
    <source>
        <dbReference type="EMBL" id="EEX03505.1"/>
    </source>
</evidence>
<evidence type="ECO:0000312" key="9">
    <source>
        <dbReference type="Proteomes" id="UP000005740"/>
    </source>
</evidence>
<evidence type="ECO:0007744" key="10">
    <source>
        <dbReference type="PDB" id="5FP1"/>
    </source>
</evidence>
<evidence type="ECO:0007829" key="11">
    <source>
        <dbReference type="PDB" id="5FP1"/>
    </source>
</evidence>
<accession>D0CAH3</accession>
<organism evidence="8 9">
    <name type="scientific">Acinetobacter baumannii (strain ATCC 19606 / DSM 30007 / JCM 6841 / CCUG 19606 / CIP 70.34 / NBRC 109757 / NCIMB 12457 / NCTC 12156 / 81)</name>
    <dbReference type="NCBI Taxonomy" id="575584"/>
    <lineage>
        <taxon>Bacteria</taxon>
        <taxon>Pseudomonadati</taxon>
        <taxon>Pseudomonadota</taxon>
        <taxon>Gammaproteobacteria</taxon>
        <taxon>Moraxellales</taxon>
        <taxon>Moraxellaceae</taxon>
        <taxon>Acinetobacter</taxon>
        <taxon>Acinetobacter calcoaceticus/baumannii complex</taxon>
    </lineage>
</organism>
<comment type="function">
    <text evidence="3 4">Probably involved in the initial step of iron uptake by binding iron chelating siderophores, thereby allowing extraction of iron from the environment (PubMed:28137795). May bind the siderophore, ferric enterobactin, with micromolar affinity (PubMed:35101443).</text>
</comment>
<comment type="subcellular location">
    <subcellularLocation>
        <location evidence="2">Cell outer membrane</location>
        <topology evidence="2">Multi-pass membrane protein</topology>
    </subcellularLocation>
</comment>
<comment type="disruption phenotype">
    <text evidence="3">Deletion decreases sensitivity to siderophore-beta-lactam drug conjugates.</text>
</comment>
<comment type="similarity">
    <text evidence="6">Belongs to the TonB-dependent receptor family.</text>
</comment>
<protein>
    <recommendedName>
        <fullName evidence="7">Probable TonB-dependent siderophore receptor PiuA</fullName>
    </recommendedName>
</protein>
<reference evidence="9" key="1">
    <citation type="journal article" date="2012" name="PLoS ONE">
        <title>The success of Acinetobacter species; genetic, metabolic and virulence attributes.</title>
        <authorList>
            <person name="Peleg A.Y."/>
            <person name="de Breij A."/>
            <person name="Adams M.D."/>
            <person name="Cerqueira G.M."/>
            <person name="Mocali S."/>
            <person name="Galardini M."/>
            <person name="Nibbering P.H."/>
            <person name="Earl A.M."/>
            <person name="Ward D.V."/>
            <person name="Paterson D.L."/>
            <person name="Seifert H."/>
            <person name="Dijkshoorn L."/>
        </authorList>
    </citation>
    <scope>NUCLEOTIDE SEQUENCE [LARGE SCALE GENOMIC DNA]</scope>
    <source>
        <strain evidence="9">ATCC 19606 / DSM 30007 / JCM 6841 / CCUG 19606 / CIP 70.34 / NBRC 109757 / NCIMB 12457 / NCTC 12156 / 81</strain>
    </source>
</reference>
<reference evidence="6" key="2">
    <citation type="journal article" date="2022" name="J. Biol. Chem.">
        <title>Fluorescent sensors of siderophores produced by bacterial pathogens.</title>
        <authorList>
            <person name="Kumar A."/>
            <person name="Yang T."/>
            <person name="Chakravorty S."/>
            <person name="Majumdar A."/>
            <person name="Nairn B.L."/>
            <person name="Six D.A."/>
            <person name="Marcondes Dos Santos N."/>
            <person name="Price S.L."/>
            <person name="Lawrenz M.B."/>
            <person name="Actis L.A."/>
            <person name="Marques M."/>
            <person name="Russo T.A."/>
            <person name="Newton S.M."/>
            <person name="Klebba P.E."/>
        </authorList>
    </citation>
    <scope>FUNCTION</scope>
    <scope>MUTAGENESIS OF SER-724</scope>
</reference>
<reference evidence="10" key="3">
    <citation type="journal article" date="2017" name="Antimicrob. Agents Chemother.">
        <title>Structure and Function of the PiuA and PirA Siderophore-Drug Receptors from Pseudomonas aeruginosa and Acinetobacter baumannii.</title>
        <authorList>
            <person name="Moynie L."/>
            <person name="Luscher A."/>
            <person name="Rolo D."/>
            <person name="Pletzer D."/>
            <person name="Tortajada A."/>
            <person name="Weingart H."/>
            <person name="Braun Y."/>
            <person name="Page M.G."/>
            <person name="Naismith J.H."/>
            <person name="Kohler T."/>
        </authorList>
    </citation>
    <scope>X-RAY CRYSTALLOGRAPHY (1.94 ANGSTROMS) OF 29-743</scope>
    <scope>FUNCTION</scope>
    <scope>DISRUPTION PHENOTYPE</scope>
    <scope>DISULFIDE BONDS</scope>
</reference>
<feature type="signal peptide" evidence="1">
    <location>
        <begin position="1"/>
        <end position="28"/>
    </location>
</feature>
<feature type="chain" id="PRO_0000458862" description="Probable TonB-dependent siderophore receptor PiuA" evidence="1">
    <location>
        <begin position="29"/>
        <end position="743"/>
    </location>
</feature>
<feature type="domain" description="TBDR plug" evidence="2">
    <location>
        <begin position="61"/>
        <end position="167"/>
    </location>
</feature>
<feature type="domain" description="TBDR beta-barrel" evidence="2">
    <location>
        <begin position="172"/>
        <end position="743"/>
    </location>
</feature>
<feature type="disulfide bond" evidence="3 10">
    <location>
        <begin position="408"/>
        <end position="416"/>
    </location>
</feature>
<feature type="disulfide bond" evidence="3 10">
    <location>
        <begin position="627"/>
        <end position="632"/>
    </location>
</feature>
<feature type="mutagenesis site" description="Despite cross-linking with fluorescein, capable of binding ferric enterobactin or ferric catecholates at micromolar affinity in vitro." evidence="4">
    <original>S</original>
    <variation>C</variation>
    <location>
        <position position="724"/>
    </location>
</feature>
<feature type="helix" evidence="11">
    <location>
        <begin position="44"/>
        <end position="46"/>
    </location>
</feature>
<feature type="helix" evidence="11">
    <location>
        <begin position="62"/>
        <end position="64"/>
    </location>
</feature>
<feature type="strand" evidence="11">
    <location>
        <begin position="66"/>
        <end position="72"/>
    </location>
</feature>
<feature type="helix" evidence="11">
    <location>
        <begin position="74"/>
        <end position="80"/>
    </location>
</feature>
<feature type="helix" evidence="11">
    <location>
        <begin position="85"/>
        <end position="88"/>
    </location>
</feature>
<feature type="helix" evidence="11">
    <location>
        <begin position="89"/>
        <end position="91"/>
    </location>
</feature>
<feature type="strand" evidence="11">
    <location>
        <begin position="102"/>
        <end position="104"/>
    </location>
</feature>
<feature type="strand" evidence="11">
    <location>
        <begin position="110"/>
        <end position="112"/>
    </location>
</feature>
<feature type="strand" evidence="11">
    <location>
        <begin position="121"/>
        <end position="123"/>
    </location>
</feature>
<feature type="strand" evidence="11">
    <location>
        <begin position="139"/>
        <end position="147"/>
    </location>
</feature>
<feature type="helix" evidence="11">
    <location>
        <begin position="150"/>
        <end position="153"/>
    </location>
</feature>
<feature type="strand" evidence="11">
    <location>
        <begin position="158"/>
        <end position="166"/>
    </location>
</feature>
<feature type="strand" evidence="11">
    <location>
        <begin position="174"/>
        <end position="182"/>
    </location>
</feature>
<feature type="turn" evidence="11">
    <location>
        <begin position="183"/>
        <end position="185"/>
    </location>
</feature>
<feature type="strand" evidence="11">
    <location>
        <begin position="186"/>
        <end position="196"/>
    </location>
</feature>
<feature type="strand" evidence="11">
    <location>
        <begin position="198"/>
        <end position="200"/>
    </location>
</feature>
<feature type="strand" evidence="11">
    <location>
        <begin position="202"/>
        <end position="213"/>
    </location>
</feature>
<feature type="strand" evidence="11">
    <location>
        <begin position="222"/>
        <end position="234"/>
    </location>
</feature>
<feature type="strand" evidence="11">
    <location>
        <begin position="238"/>
        <end position="251"/>
    </location>
</feature>
<feature type="strand" evidence="11">
    <location>
        <begin position="259"/>
        <end position="263"/>
    </location>
</feature>
<feature type="turn" evidence="11">
    <location>
        <begin position="264"/>
        <end position="267"/>
    </location>
</feature>
<feature type="strand" evidence="11">
    <location>
        <begin position="268"/>
        <end position="273"/>
    </location>
</feature>
<feature type="turn" evidence="11">
    <location>
        <begin position="285"/>
        <end position="287"/>
    </location>
</feature>
<feature type="strand" evidence="11">
    <location>
        <begin position="289"/>
        <end position="306"/>
    </location>
</feature>
<feature type="strand" evidence="11">
    <location>
        <begin position="309"/>
        <end position="330"/>
    </location>
</feature>
<feature type="helix" evidence="11">
    <location>
        <begin position="335"/>
        <end position="338"/>
    </location>
</feature>
<feature type="strand" evidence="11">
    <location>
        <begin position="340"/>
        <end position="366"/>
    </location>
</feature>
<feature type="strand" evidence="11">
    <location>
        <begin position="371"/>
        <end position="393"/>
    </location>
</feature>
<feature type="strand" evidence="11">
    <location>
        <begin position="399"/>
        <end position="402"/>
    </location>
</feature>
<feature type="strand" evidence="11">
    <location>
        <begin position="416"/>
        <end position="421"/>
    </location>
</feature>
<feature type="strand" evidence="11">
    <location>
        <begin position="429"/>
        <end position="455"/>
    </location>
</feature>
<feature type="strand" evidence="11">
    <location>
        <begin position="458"/>
        <end position="475"/>
    </location>
</feature>
<feature type="strand" evidence="11">
    <location>
        <begin position="479"/>
        <end position="481"/>
    </location>
</feature>
<feature type="strand" evidence="11">
    <location>
        <begin position="484"/>
        <end position="501"/>
    </location>
</feature>
<feature type="strand" evidence="11">
    <location>
        <begin position="507"/>
        <end position="518"/>
    </location>
</feature>
<feature type="turn" evidence="11">
    <location>
        <begin position="520"/>
        <end position="525"/>
    </location>
</feature>
<feature type="helix" evidence="11">
    <location>
        <begin position="529"/>
        <end position="531"/>
    </location>
</feature>
<feature type="turn" evidence="11">
    <location>
        <begin position="535"/>
        <end position="539"/>
    </location>
</feature>
<feature type="strand" evidence="11">
    <location>
        <begin position="543"/>
        <end position="556"/>
    </location>
</feature>
<feature type="turn" evidence="11">
    <location>
        <begin position="557"/>
        <end position="560"/>
    </location>
</feature>
<feature type="strand" evidence="11">
    <location>
        <begin position="561"/>
        <end position="580"/>
    </location>
</feature>
<feature type="strand" evidence="11">
    <location>
        <begin position="583"/>
        <end position="622"/>
    </location>
</feature>
<feature type="strand" evidence="11">
    <location>
        <begin position="625"/>
        <end position="628"/>
    </location>
</feature>
<feature type="strand" evidence="11">
    <location>
        <begin position="631"/>
        <end position="634"/>
    </location>
</feature>
<feature type="helix" evidence="11">
    <location>
        <begin position="636"/>
        <end position="638"/>
    </location>
</feature>
<feature type="strand" evidence="11">
    <location>
        <begin position="648"/>
        <end position="660"/>
    </location>
</feature>
<feature type="strand" evidence="11">
    <location>
        <begin position="663"/>
        <end position="672"/>
    </location>
</feature>
<feature type="strand" evidence="11">
    <location>
        <begin position="683"/>
        <end position="685"/>
    </location>
</feature>
<feature type="strand" evidence="11">
    <location>
        <begin position="688"/>
        <end position="698"/>
    </location>
</feature>
<feature type="strand" evidence="11">
    <location>
        <begin position="700"/>
        <end position="711"/>
    </location>
</feature>
<feature type="strand" evidence="11">
    <location>
        <begin position="718"/>
        <end position="721"/>
    </location>
</feature>
<feature type="strand" evidence="11">
    <location>
        <begin position="723"/>
        <end position="729"/>
    </location>
</feature>
<feature type="strand" evidence="11">
    <location>
        <begin position="734"/>
        <end position="743"/>
    </location>
</feature>